<sequence>MSQSGAVSCCPGATNGSLGRSDGVAKMSPKDLFEQRKKYSNSNVIMHETSQYHVQHLATFIMDKSEAITSVDDAIRKLVQLSSKEKIWTQEMLLQVNDQSLRLLDIESQEELEDFPLPTVQRSQTVLNQLRYPSVLLLVCQDSEQSKPDVHFFHCDEVEAELVHEDIESALADCRLGKKMRPQTLKGHQEKIRQRQSILPPPQGPAPIPFQHRGGDSPEAKNRVGPQVPLSEPGFRRRESQEEPRAVLAQKIEKETQILNCALDDIEWFVARLQKAAEAFKQLNQRKKGKKKGKKAPAEGVLTLRARPPSEGEFIDCFQKIKLAINLLAKLQKHIQNPSAAELVHFLFGPLDLIVNTCSGPDIARSVSCPLLSRDAVDFLRGHLVPKEMSLWESLGESWMRPRSEWPREPQVPLYVPKFHSGWEPPVDVLQEAPWEVEGLASAPIEEVSPVSRQSIRNSQKHSPTSEPTPPGDALPPVSSPHTHRGYQPTPAMAKYVKILYDFTARNANELSVLKDEVLEVLEDGRQWWKLRSRSGQAGYVPCNILGEARPEDAGAPFEQAGQKYWGPASPTHKLPPSFPGNKDELMQHMDEVNDELIRKISNIRAQPQRHFRVERSQPVSQPLTYESGPDEVRAWLEAKAFSPRIVENLGILTGPQLFSLNKEELKKVCGEEGVRVYSQLTMQKAFLEKQQSGSELEELMNKFHSMNQRRGEDS</sequence>
<organism>
    <name type="scientific">Homo sapiens</name>
    <name type="common">Human</name>
    <dbReference type="NCBI Taxonomy" id="9606"/>
    <lineage>
        <taxon>Eukaryota</taxon>
        <taxon>Metazoa</taxon>
        <taxon>Chordata</taxon>
        <taxon>Craniata</taxon>
        <taxon>Vertebrata</taxon>
        <taxon>Euteleostomi</taxon>
        <taxon>Mammalia</taxon>
        <taxon>Eutheria</taxon>
        <taxon>Euarchontoglires</taxon>
        <taxon>Primates</taxon>
        <taxon>Haplorrhini</taxon>
        <taxon>Catarrhini</taxon>
        <taxon>Hominidae</taxon>
        <taxon>Homo</taxon>
    </lineage>
</organism>
<reference key="1">
    <citation type="journal article" date="2003" name="Genomics">
        <title>In silico analysis of the EPS8 gene family: genomic organization, expression profile, and protein structure.</title>
        <authorList>
            <person name="Tocchetti A."/>
            <person name="Confalonieri S."/>
            <person name="Scita G."/>
            <person name="Di Fiore P.P."/>
            <person name="Betsholtz C."/>
        </authorList>
    </citation>
    <scope>NUCLEOTIDE SEQUENCE [MRNA] (ISOFORM 1)</scope>
</reference>
<reference key="2">
    <citation type="journal article" date="2004" name="Proc. Natl. Acad. Sci. U.S.A.">
        <title>Large-scale cDNA transfection screening for genes related to cancer development and progression.</title>
        <authorList>
            <person name="Wan D."/>
            <person name="Gong Y."/>
            <person name="Qin W."/>
            <person name="Zhang P."/>
            <person name="Li J."/>
            <person name="Wei L."/>
            <person name="Zhou X."/>
            <person name="Li H."/>
            <person name="Qiu X."/>
            <person name="Zhong F."/>
            <person name="He L."/>
            <person name="Yu J."/>
            <person name="Yao G."/>
            <person name="Jiang H."/>
            <person name="Qian L."/>
            <person name="Yu Y."/>
            <person name="Shu H."/>
            <person name="Chen X."/>
            <person name="Xu H."/>
            <person name="Guo M."/>
            <person name="Pan Z."/>
            <person name="Chen Y."/>
            <person name="Ge C."/>
            <person name="Yang S."/>
            <person name="Gu J."/>
        </authorList>
    </citation>
    <scope>NUCLEOTIDE SEQUENCE [LARGE SCALE MRNA] (ISOFORM 2)</scope>
</reference>
<reference key="3">
    <citation type="journal article" date="2004" name="Nat. Genet.">
        <title>Complete sequencing and characterization of 21,243 full-length human cDNAs.</title>
        <authorList>
            <person name="Ota T."/>
            <person name="Suzuki Y."/>
            <person name="Nishikawa T."/>
            <person name="Otsuki T."/>
            <person name="Sugiyama T."/>
            <person name="Irie R."/>
            <person name="Wakamatsu A."/>
            <person name="Hayashi K."/>
            <person name="Sato H."/>
            <person name="Nagai K."/>
            <person name="Kimura K."/>
            <person name="Makita H."/>
            <person name="Sekine M."/>
            <person name="Obayashi M."/>
            <person name="Nishi T."/>
            <person name="Shibahara T."/>
            <person name="Tanaka T."/>
            <person name="Ishii S."/>
            <person name="Yamamoto J."/>
            <person name="Saito K."/>
            <person name="Kawai Y."/>
            <person name="Isono Y."/>
            <person name="Nakamura Y."/>
            <person name="Nagahari K."/>
            <person name="Murakami K."/>
            <person name="Yasuda T."/>
            <person name="Iwayanagi T."/>
            <person name="Wagatsuma M."/>
            <person name="Shiratori A."/>
            <person name="Sudo H."/>
            <person name="Hosoiri T."/>
            <person name="Kaku Y."/>
            <person name="Kodaira H."/>
            <person name="Kondo H."/>
            <person name="Sugawara M."/>
            <person name="Takahashi M."/>
            <person name="Kanda K."/>
            <person name="Yokoi T."/>
            <person name="Furuya T."/>
            <person name="Kikkawa E."/>
            <person name="Omura Y."/>
            <person name="Abe K."/>
            <person name="Kamihara K."/>
            <person name="Katsuta N."/>
            <person name="Sato K."/>
            <person name="Tanikawa M."/>
            <person name="Yamazaki M."/>
            <person name="Ninomiya K."/>
            <person name="Ishibashi T."/>
            <person name="Yamashita H."/>
            <person name="Murakawa K."/>
            <person name="Fujimori K."/>
            <person name="Tanai H."/>
            <person name="Kimata M."/>
            <person name="Watanabe M."/>
            <person name="Hiraoka S."/>
            <person name="Chiba Y."/>
            <person name="Ishida S."/>
            <person name="Ono Y."/>
            <person name="Takiguchi S."/>
            <person name="Watanabe S."/>
            <person name="Yosida M."/>
            <person name="Hotuta T."/>
            <person name="Kusano J."/>
            <person name="Kanehori K."/>
            <person name="Takahashi-Fujii A."/>
            <person name="Hara H."/>
            <person name="Tanase T.-O."/>
            <person name="Nomura Y."/>
            <person name="Togiya S."/>
            <person name="Komai F."/>
            <person name="Hara R."/>
            <person name="Takeuchi K."/>
            <person name="Arita M."/>
            <person name="Imose N."/>
            <person name="Musashino K."/>
            <person name="Yuuki H."/>
            <person name="Oshima A."/>
            <person name="Sasaki N."/>
            <person name="Aotsuka S."/>
            <person name="Yoshikawa Y."/>
            <person name="Matsunawa H."/>
            <person name="Ichihara T."/>
            <person name="Shiohata N."/>
            <person name="Sano S."/>
            <person name="Moriya S."/>
            <person name="Momiyama H."/>
            <person name="Satoh N."/>
            <person name="Takami S."/>
            <person name="Terashima Y."/>
            <person name="Suzuki O."/>
            <person name="Nakagawa S."/>
            <person name="Senoh A."/>
            <person name="Mizoguchi H."/>
            <person name="Goto Y."/>
            <person name="Shimizu F."/>
            <person name="Wakebe H."/>
            <person name="Hishigaki H."/>
            <person name="Watanabe T."/>
            <person name="Sugiyama A."/>
            <person name="Takemoto M."/>
            <person name="Kawakami B."/>
            <person name="Yamazaki M."/>
            <person name="Watanabe K."/>
            <person name="Kumagai A."/>
            <person name="Itakura S."/>
            <person name="Fukuzumi Y."/>
            <person name="Fujimori Y."/>
            <person name="Komiyama M."/>
            <person name="Tashiro H."/>
            <person name="Tanigami A."/>
            <person name="Fujiwara T."/>
            <person name="Ono T."/>
            <person name="Yamada K."/>
            <person name="Fujii Y."/>
            <person name="Ozaki K."/>
            <person name="Hirao M."/>
            <person name="Ohmori Y."/>
            <person name="Kawabata A."/>
            <person name="Hikiji T."/>
            <person name="Kobatake N."/>
            <person name="Inagaki H."/>
            <person name="Ikema Y."/>
            <person name="Okamoto S."/>
            <person name="Okitani R."/>
            <person name="Kawakami T."/>
            <person name="Noguchi S."/>
            <person name="Itoh T."/>
            <person name="Shigeta K."/>
            <person name="Senba T."/>
            <person name="Matsumura K."/>
            <person name="Nakajima Y."/>
            <person name="Mizuno T."/>
            <person name="Morinaga M."/>
            <person name="Sasaki M."/>
            <person name="Togashi T."/>
            <person name="Oyama M."/>
            <person name="Hata H."/>
            <person name="Watanabe M."/>
            <person name="Komatsu T."/>
            <person name="Mizushima-Sugano J."/>
            <person name="Satoh T."/>
            <person name="Shirai Y."/>
            <person name="Takahashi Y."/>
            <person name="Nakagawa K."/>
            <person name="Okumura K."/>
            <person name="Nagase T."/>
            <person name="Nomura N."/>
            <person name="Kikuchi H."/>
            <person name="Masuho Y."/>
            <person name="Yamashita R."/>
            <person name="Nakai K."/>
            <person name="Yada T."/>
            <person name="Nakamura Y."/>
            <person name="Ohara O."/>
            <person name="Isogai T."/>
            <person name="Sugano S."/>
        </authorList>
    </citation>
    <scope>NUCLEOTIDE SEQUENCE [LARGE SCALE MRNA] (ISOFORMS 1 AND 2)</scope>
    <source>
        <tissue>Brain cortex</tissue>
        <tissue>Placenta</tissue>
    </source>
</reference>
<reference key="4">
    <citation type="submission" date="2005-04" db="EMBL/GenBank/DDBJ databases">
        <authorList>
            <person name="Suzuki Y."/>
            <person name="Sugano S."/>
            <person name="Totoki Y."/>
            <person name="Toyoda A."/>
            <person name="Takeda T."/>
            <person name="Sakaki Y."/>
            <person name="Tanaka A."/>
            <person name="Yokoyama S."/>
        </authorList>
    </citation>
    <scope>NUCLEOTIDE SEQUENCE [LARGE SCALE MRNA] (ISOFORM 1)</scope>
    <source>
        <tissue>Kidney</tissue>
    </source>
</reference>
<reference key="5">
    <citation type="journal article" date="2006" name="Nature">
        <title>Human chromosome 11 DNA sequence and analysis including novel gene identification.</title>
        <authorList>
            <person name="Taylor T.D."/>
            <person name="Noguchi H."/>
            <person name="Totoki Y."/>
            <person name="Toyoda A."/>
            <person name="Kuroki Y."/>
            <person name="Dewar K."/>
            <person name="Lloyd C."/>
            <person name="Itoh T."/>
            <person name="Takeda T."/>
            <person name="Kim D.-W."/>
            <person name="She X."/>
            <person name="Barlow K.F."/>
            <person name="Bloom T."/>
            <person name="Bruford E."/>
            <person name="Chang J.L."/>
            <person name="Cuomo C.A."/>
            <person name="Eichler E."/>
            <person name="FitzGerald M.G."/>
            <person name="Jaffe D.B."/>
            <person name="LaButti K."/>
            <person name="Nicol R."/>
            <person name="Park H.-S."/>
            <person name="Seaman C."/>
            <person name="Sougnez C."/>
            <person name="Yang X."/>
            <person name="Zimmer A.R."/>
            <person name="Zody M.C."/>
            <person name="Birren B.W."/>
            <person name="Nusbaum C."/>
            <person name="Fujiyama A."/>
            <person name="Hattori M."/>
            <person name="Rogers J."/>
            <person name="Lander E.S."/>
            <person name="Sakaki Y."/>
        </authorList>
    </citation>
    <scope>NUCLEOTIDE SEQUENCE [LARGE SCALE GENOMIC DNA]</scope>
</reference>
<reference key="6">
    <citation type="journal article" date="2004" name="Genome Res.">
        <title>The status, quality, and expansion of the NIH full-length cDNA project: the Mammalian Gene Collection (MGC).</title>
        <authorList>
            <consortium name="The MGC Project Team"/>
        </authorList>
    </citation>
    <scope>NUCLEOTIDE SEQUENCE [LARGE SCALE MRNA] (ISOFORMS 1 AND 3)</scope>
    <source>
        <tissue>Brain</tissue>
        <tissue>Prostate</tissue>
    </source>
</reference>
<reference key="7">
    <citation type="journal article" date="2004" name="Mol. Biol. Cell">
        <title>The eps8 family of proteins links growth factor stimulation to actin reorganization generating functional redundancy in the Ras/Rac pathway.</title>
        <authorList>
            <person name="Offenhaeuser N."/>
            <person name="Borgonovo A."/>
            <person name="Disanza A."/>
            <person name="Romano P."/>
            <person name="Ponzanelli I."/>
            <person name="Iannolo G."/>
            <person name="Di Fiore P.P."/>
            <person name="Scita G."/>
        </authorList>
    </citation>
    <scope>FUNCTION</scope>
    <scope>IDENTIFICATION IN A COMPLEX WITH ABI1 AND SOS1</scope>
    <scope>INTERACTION WITH ABI1</scope>
    <scope>SUBCELLULAR LOCATION</scope>
    <scope>TISSUE SPECIFICITY</scope>
</reference>
<reference key="8">
    <citation type="journal article" date="2008" name="J. Proteome Res.">
        <title>Combining protein-based IMAC, peptide-based IMAC, and MudPIT for efficient phosphoproteomic analysis.</title>
        <authorList>
            <person name="Cantin G.T."/>
            <person name="Yi W."/>
            <person name="Lu B."/>
            <person name="Park S.K."/>
            <person name="Xu T."/>
            <person name="Lee J.-D."/>
            <person name="Yates J.R. III"/>
        </authorList>
    </citation>
    <scope>PHOSPHORYLATION [LARGE SCALE ANALYSIS] AT SER-449</scope>
    <scope>IDENTIFICATION BY MASS SPECTROMETRY [LARGE SCALE ANALYSIS]</scope>
    <source>
        <tissue>Cervix carcinoma</tissue>
    </source>
</reference>
<reference key="9">
    <citation type="journal article" date="2008" name="Proc. Natl. Acad. Sci. U.S.A.">
        <title>A quantitative atlas of mitotic phosphorylation.</title>
        <authorList>
            <person name="Dephoure N."/>
            <person name="Zhou C."/>
            <person name="Villen J."/>
            <person name="Beausoleil S.A."/>
            <person name="Bakalarski C.E."/>
            <person name="Elledge S.J."/>
            <person name="Gygi S.P."/>
        </authorList>
    </citation>
    <scope>PHOSPHORYLATION [LARGE SCALE ANALYSIS] AT THR-469 AND SER-570</scope>
    <scope>IDENTIFICATION BY MASS SPECTROMETRY [LARGE SCALE ANALYSIS]</scope>
    <source>
        <tissue>Cervix carcinoma</tissue>
    </source>
</reference>
<reference key="10">
    <citation type="journal article" date="2010" name="Sci. Signal.">
        <title>Quantitative phosphoproteomics reveals widespread full phosphorylation site occupancy during mitosis.</title>
        <authorList>
            <person name="Olsen J.V."/>
            <person name="Vermeulen M."/>
            <person name="Santamaria A."/>
            <person name="Kumar C."/>
            <person name="Miller M.L."/>
            <person name="Jensen L.J."/>
            <person name="Gnad F."/>
            <person name="Cox J."/>
            <person name="Jensen T.S."/>
            <person name="Nigg E.A."/>
            <person name="Brunak S."/>
            <person name="Mann M."/>
        </authorList>
    </citation>
    <scope>IDENTIFICATION BY MASS SPECTROMETRY [LARGE SCALE ANALYSIS]</scope>
    <source>
        <tissue>Cervix carcinoma</tissue>
    </source>
</reference>
<reference key="11">
    <citation type="journal article" date="2011" name="BMC Syst. Biol.">
        <title>Initial characterization of the human central proteome.</title>
        <authorList>
            <person name="Burkard T.R."/>
            <person name="Planyavsky M."/>
            <person name="Kaupe I."/>
            <person name="Breitwieser F.P."/>
            <person name="Buerckstuemmer T."/>
            <person name="Bennett K.L."/>
            <person name="Superti-Furga G."/>
            <person name="Colinge J."/>
        </authorList>
    </citation>
    <scope>IDENTIFICATION BY MASS SPECTROMETRY [LARGE SCALE ANALYSIS]</scope>
</reference>
<reference key="12">
    <citation type="journal article" date="2012" name="Proc. Natl. Acad. Sci. U.S.A.">
        <title>N-terminal acetylome analyses and functional insights of the N-terminal acetyltransferase NatB.</title>
        <authorList>
            <person name="Van Damme P."/>
            <person name="Lasa M."/>
            <person name="Polevoda B."/>
            <person name="Gazquez C."/>
            <person name="Elosegui-Artola A."/>
            <person name="Kim D.S."/>
            <person name="De Juan-Pardo E."/>
            <person name="Demeyer K."/>
            <person name="Hole K."/>
            <person name="Larrea E."/>
            <person name="Timmerman E."/>
            <person name="Prieto J."/>
            <person name="Arnesen T."/>
            <person name="Sherman F."/>
            <person name="Gevaert K."/>
            <person name="Aldabe R."/>
        </authorList>
    </citation>
    <scope>IDENTIFICATION BY MASS SPECTROMETRY [LARGE SCALE ANALYSIS]</scope>
</reference>
<reference key="13">
    <citation type="journal article" date="2013" name="J. Proteome Res.">
        <title>Toward a comprehensive characterization of a human cancer cell phosphoproteome.</title>
        <authorList>
            <person name="Zhou H."/>
            <person name="Di Palma S."/>
            <person name="Preisinger C."/>
            <person name="Peng M."/>
            <person name="Polat A.N."/>
            <person name="Heck A.J."/>
            <person name="Mohammed S."/>
        </authorList>
    </citation>
    <scope>PHOSPHORYLATION [LARGE SCALE ANALYSIS] AT SER-570</scope>
    <scope>IDENTIFICATION BY MASS SPECTROMETRY [LARGE SCALE ANALYSIS]</scope>
    <source>
        <tissue>Cervix carcinoma</tissue>
        <tissue>Erythroleukemia</tissue>
    </source>
</reference>
<reference key="14">
    <citation type="journal article" date="2014" name="J. Proteomics">
        <title>An enzyme assisted RP-RPLC approach for in-depth analysis of human liver phosphoproteome.</title>
        <authorList>
            <person name="Bian Y."/>
            <person name="Song C."/>
            <person name="Cheng K."/>
            <person name="Dong M."/>
            <person name="Wang F."/>
            <person name="Huang J."/>
            <person name="Sun D."/>
            <person name="Wang L."/>
            <person name="Ye M."/>
            <person name="Zou H."/>
        </authorList>
    </citation>
    <scope>PHOSPHORYLATION [LARGE SCALE ANALYSIS] AT SER-240 AND SER-570</scope>
    <scope>IDENTIFICATION BY MASS SPECTROMETRY [LARGE SCALE ANALYSIS]</scope>
    <source>
        <tissue>Liver</tissue>
    </source>
</reference>
<reference key="15">
    <citation type="submission" date="2005-07" db="PDB data bank">
        <title>solution structure of the SH3 domain from human epidermal growth factor receptor pathway substrate 8-like protein.</title>
        <authorList>
            <consortium name="RIKEN structural genomics initiative (RSGI)"/>
        </authorList>
    </citation>
    <scope>STRUCTURE BY NMR OF 495-549</scope>
</reference>
<reference key="16">
    <citation type="journal article" date="2015" name="Orphanet J. Rare Dis.">
        <title>EPS8L2 is a new causal gene for childhood onset autosomal recessive progressive hearing loss.</title>
        <authorList>
            <person name="Dahmani M."/>
            <person name="Ammar-Khodja F."/>
            <person name="Bonnet C."/>
            <person name="Lefevre G.M."/>
            <person name="Hardelin J.P."/>
            <person name="Ibrahim H."/>
            <person name="Mallek Z."/>
            <person name="Petit C."/>
        </authorList>
    </citation>
    <scope>INVOLVEMENT IN DFNB106</scope>
</reference>
<reference key="17">
    <citation type="journal article" date="2017" name="Genet. Test. Mol. Biomarkers">
        <title>Molecular Analysis of Twelve Pakistani Families with Nonsyndromic or Syndromic Hearing Loss.</title>
        <authorList>
            <person name="Wang R."/>
            <person name="Han S."/>
            <person name="Khan A."/>
            <person name="Zhang X."/>
        </authorList>
    </citation>
    <scope>INVOLVEMENT IN DFNB106</scope>
</reference>
<accession>Q9H6S3</accession>
<accession>B3KSX1</accession>
<accession>B7ZKL3</accession>
<accession>Q53GM8</accession>
<accession>Q8WYW7</accession>
<accession>Q96K06</accession>
<accession>Q9H6K9</accession>
<evidence type="ECO:0000250" key="1">
    <source>
        <dbReference type="UniProtKB" id="Q99K30"/>
    </source>
</evidence>
<evidence type="ECO:0000255" key="2">
    <source>
        <dbReference type="PROSITE-ProRule" id="PRU00148"/>
    </source>
</evidence>
<evidence type="ECO:0000255" key="3">
    <source>
        <dbReference type="PROSITE-ProRule" id="PRU00192"/>
    </source>
</evidence>
<evidence type="ECO:0000256" key="4">
    <source>
        <dbReference type="SAM" id="MobiDB-lite"/>
    </source>
</evidence>
<evidence type="ECO:0000269" key="5">
    <source>
    </source>
</evidence>
<evidence type="ECO:0000269" key="6">
    <source>
    </source>
</evidence>
<evidence type="ECO:0000269" key="7">
    <source>
    </source>
</evidence>
<evidence type="ECO:0000303" key="8">
    <source>
    </source>
</evidence>
<evidence type="ECO:0000303" key="9">
    <source>
    </source>
</evidence>
<evidence type="ECO:0000303" key="10">
    <source>
    </source>
</evidence>
<evidence type="ECO:0000305" key="11"/>
<evidence type="ECO:0007744" key="12">
    <source>
    </source>
</evidence>
<evidence type="ECO:0007744" key="13">
    <source>
    </source>
</evidence>
<evidence type="ECO:0007744" key="14">
    <source>
    </source>
</evidence>
<evidence type="ECO:0007744" key="15">
    <source>
    </source>
</evidence>
<evidence type="ECO:0007829" key="16">
    <source>
        <dbReference type="PDB" id="1WWU"/>
    </source>
</evidence>
<evidence type="ECO:0007829" key="17">
    <source>
        <dbReference type="PDB" id="1WXB"/>
    </source>
</evidence>
<dbReference type="EMBL" id="AY074929">
    <property type="protein sequence ID" value="AAL76118.1"/>
    <property type="molecule type" value="mRNA"/>
</dbReference>
<dbReference type="EMBL" id="AF318331">
    <property type="protein sequence ID" value="AAL55838.1"/>
    <property type="status" value="ALT_FRAME"/>
    <property type="molecule type" value="mRNA"/>
</dbReference>
<dbReference type="EMBL" id="AK025588">
    <property type="protein sequence ID" value="BAB15180.1"/>
    <property type="status" value="ALT_INIT"/>
    <property type="molecule type" value="mRNA"/>
</dbReference>
<dbReference type="EMBL" id="AK025824">
    <property type="protein sequence ID" value="BAB15248.1"/>
    <property type="molecule type" value="mRNA"/>
</dbReference>
<dbReference type="EMBL" id="AK027765">
    <property type="protein sequence ID" value="BAB55354.1"/>
    <property type="molecule type" value="mRNA"/>
</dbReference>
<dbReference type="EMBL" id="AK094539">
    <property type="protein sequence ID" value="BAG52883.1"/>
    <property type="molecule type" value="mRNA"/>
</dbReference>
<dbReference type="EMBL" id="AK222903">
    <property type="protein sequence ID" value="BAD96623.1"/>
    <property type="molecule type" value="mRNA"/>
</dbReference>
<dbReference type="EMBL" id="BC080636">
    <property type="protein sequence ID" value="AAH80636.1"/>
    <property type="molecule type" value="mRNA"/>
</dbReference>
<dbReference type="EMBL" id="BC093878">
    <property type="protein sequence ID" value="AAH93878.1"/>
    <property type="molecule type" value="mRNA"/>
</dbReference>
<dbReference type="EMBL" id="BC101481">
    <property type="protein sequence ID" value="AAI01482.1"/>
    <property type="molecule type" value="mRNA"/>
</dbReference>
<dbReference type="EMBL" id="BC143242">
    <property type="protein sequence ID" value="AAI43243.1"/>
    <property type="molecule type" value="mRNA"/>
</dbReference>
<dbReference type="EMBL" id="AC131934">
    <property type="status" value="NOT_ANNOTATED_CDS"/>
    <property type="molecule type" value="Genomic_DNA"/>
</dbReference>
<dbReference type="EMBL" id="AP006621">
    <property type="status" value="NOT_ANNOTATED_CDS"/>
    <property type="molecule type" value="Genomic_DNA"/>
</dbReference>
<dbReference type="CCDS" id="CCDS31328.1">
    <molecule id="Q9H6S3-1"/>
</dbReference>
<dbReference type="RefSeq" id="NP_073609.2">
    <molecule id="Q9H6S3-1"/>
    <property type="nucleotide sequence ID" value="NM_022772.3"/>
</dbReference>
<dbReference type="RefSeq" id="XP_016873619.1">
    <property type="nucleotide sequence ID" value="XM_017018130.1"/>
</dbReference>
<dbReference type="RefSeq" id="XP_016873620.1">
    <property type="nucleotide sequence ID" value="XM_017018131.1"/>
</dbReference>
<dbReference type="RefSeq" id="XP_016873621.1">
    <molecule id="Q9H6S3-1"/>
    <property type="nucleotide sequence ID" value="XM_017018132.2"/>
</dbReference>
<dbReference type="RefSeq" id="XP_047283367.1">
    <molecule id="Q9H6S3-1"/>
    <property type="nucleotide sequence ID" value="XM_047427411.1"/>
</dbReference>
<dbReference type="PDB" id="1WWU">
    <property type="method" value="NMR"/>
    <property type="chains" value="A=612-697"/>
</dbReference>
<dbReference type="PDB" id="1WXB">
    <property type="method" value="NMR"/>
    <property type="chains" value="A=495-549"/>
</dbReference>
<dbReference type="PDBsum" id="1WWU"/>
<dbReference type="PDBsum" id="1WXB"/>
<dbReference type="SMR" id="Q9H6S3"/>
<dbReference type="BioGRID" id="122297">
    <property type="interactions" value="62"/>
</dbReference>
<dbReference type="CORUM" id="Q9H6S3"/>
<dbReference type="FunCoup" id="Q9H6S3">
    <property type="interactions" value="78"/>
</dbReference>
<dbReference type="IntAct" id="Q9H6S3">
    <property type="interactions" value="41"/>
</dbReference>
<dbReference type="MINT" id="Q9H6S3"/>
<dbReference type="STRING" id="9606.ENSP00000435585"/>
<dbReference type="GlyCosmos" id="Q9H6S3">
    <property type="glycosylation" value="1 site, 1 glycan"/>
</dbReference>
<dbReference type="GlyGen" id="Q9H6S3">
    <property type="glycosylation" value="3 sites, 1 O-linked glycan (1 site)"/>
</dbReference>
<dbReference type="iPTMnet" id="Q9H6S3"/>
<dbReference type="MetOSite" id="Q9H6S3"/>
<dbReference type="PhosphoSitePlus" id="Q9H6S3"/>
<dbReference type="SwissPalm" id="Q9H6S3"/>
<dbReference type="BioMuta" id="EPS8L2"/>
<dbReference type="DMDM" id="108864726"/>
<dbReference type="jPOST" id="Q9H6S3"/>
<dbReference type="MassIVE" id="Q9H6S3"/>
<dbReference type="PaxDb" id="9606-ENSP00000435585"/>
<dbReference type="PeptideAtlas" id="Q9H6S3"/>
<dbReference type="ProteomicsDB" id="7181"/>
<dbReference type="ProteomicsDB" id="81028">
    <molecule id="Q9H6S3-1"/>
</dbReference>
<dbReference type="ProteomicsDB" id="81029">
    <molecule id="Q9H6S3-2"/>
</dbReference>
<dbReference type="Antibodypedia" id="22613">
    <property type="antibodies" value="253 antibodies from 28 providers"/>
</dbReference>
<dbReference type="DNASU" id="64787"/>
<dbReference type="Ensembl" id="ENST00000318562.13">
    <molecule id="Q9H6S3-1"/>
    <property type="protein sequence ID" value="ENSP00000320828.8"/>
    <property type="gene ID" value="ENSG00000177106.17"/>
</dbReference>
<dbReference type="Ensembl" id="ENST00000526198.5">
    <molecule id="Q9H6S3-3"/>
    <property type="protein sequence ID" value="ENSP00000436230.1"/>
    <property type="gene ID" value="ENSG00000177106.17"/>
</dbReference>
<dbReference type="Ensembl" id="ENST00000530636.5">
    <molecule id="Q9H6S3-1"/>
    <property type="protein sequence ID" value="ENSP00000436035.1"/>
    <property type="gene ID" value="ENSG00000177106.17"/>
</dbReference>
<dbReference type="Ensembl" id="ENST00000533256.5">
    <molecule id="Q9H6S3-1"/>
    <property type="protein sequence ID" value="ENSP00000435585.1"/>
    <property type="gene ID" value="ENSG00000177106.17"/>
</dbReference>
<dbReference type="Ensembl" id="ENST00000614442.4">
    <molecule id="Q9H6S3-3"/>
    <property type="protein sequence ID" value="ENSP00000480201.1"/>
    <property type="gene ID" value="ENSG00000177106.17"/>
</dbReference>
<dbReference type="GeneID" id="64787"/>
<dbReference type="KEGG" id="hsa:64787"/>
<dbReference type="MANE-Select" id="ENST00000318562.13">
    <property type="protein sequence ID" value="ENSP00000320828.8"/>
    <property type="RefSeq nucleotide sequence ID" value="NM_022772.4"/>
    <property type="RefSeq protein sequence ID" value="NP_073609.2"/>
</dbReference>
<dbReference type="UCSC" id="uc001lqt.4">
    <molecule id="Q9H6S3-1"/>
    <property type="organism name" value="human"/>
</dbReference>
<dbReference type="AGR" id="HGNC:21296"/>
<dbReference type="CTD" id="64787"/>
<dbReference type="DisGeNET" id="64787"/>
<dbReference type="GeneCards" id="EPS8L2"/>
<dbReference type="HGNC" id="HGNC:21296">
    <property type="gene designation" value="EPS8L2"/>
</dbReference>
<dbReference type="HPA" id="ENSG00000177106">
    <property type="expression patterns" value="Tissue enhanced (esophagus)"/>
</dbReference>
<dbReference type="MalaCards" id="EPS8L2"/>
<dbReference type="MIM" id="614988">
    <property type="type" value="gene"/>
</dbReference>
<dbReference type="MIM" id="617637">
    <property type="type" value="phenotype"/>
</dbReference>
<dbReference type="neXtProt" id="NX_Q9H6S3"/>
<dbReference type="OpenTargets" id="ENSG00000177106"/>
<dbReference type="Orphanet" id="90636">
    <property type="disease" value="Rare autosomal recessive non-syndromic sensorineural deafness type DFNB"/>
</dbReference>
<dbReference type="PharmGKB" id="PA134981048"/>
<dbReference type="VEuPathDB" id="HostDB:ENSG00000177106"/>
<dbReference type="eggNOG" id="KOG3557">
    <property type="taxonomic scope" value="Eukaryota"/>
</dbReference>
<dbReference type="GeneTree" id="ENSGT00940000160990"/>
<dbReference type="HOGENOM" id="CLU_014510_0_0_1"/>
<dbReference type="InParanoid" id="Q9H6S3"/>
<dbReference type="OMA" id="RNTMALY"/>
<dbReference type="OrthoDB" id="4680325at2759"/>
<dbReference type="PAN-GO" id="Q9H6S3">
    <property type="GO annotations" value="6 GO annotations based on evolutionary models"/>
</dbReference>
<dbReference type="PhylomeDB" id="Q9H6S3"/>
<dbReference type="TreeFam" id="TF313069"/>
<dbReference type="PathwayCommons" id="Q9H6S3"/>
<dbReference type="Reactome" id="R-HSA-9662360">
    <property type="pathway name" value="Sensory processing of sound by inner hair cells of the cochlea"/>
</dbReference>
<dbReference type="Reactome" id="R-HSA-9662361">
    <property type="pathway name" value="Sensory processing of sound by outer hair cells of the cochlea"/>
</dbReference>
<dbReference type="SignaLink" id="Q9H6S3"/>
<dbReference type="BioGRID-ORCS" id="64787">
    <property type="hits" value="28 hits in 1155 CRISPR screens"/>
</dbReference>
<dbReference type="ChiTaRS" id="EPS8L2">
    <property type="organism name" value="human"/>
</dbReference>
<dbReference type="EvolutionaryTrace" id="Q9H6S3"/>
<dbReference type="GeneWiki" id="EPS8L2"/>
<dbReference type="GenomeRNAi" id="64787"/>
<dbReference type="Pharos" id="Q9H6S3">
    <property type="development level" value="Tbio"/>
</dbReference>
<dbReference type="PRO" id="PR:Q9H6S3"/>
<dbReference type="Proteomes" id="UP000005640">
    <property type="component" value="Chromosome 11"/>
</dbReference>
<dbReference type="RNAct" id="Q9H6S3">
    <property type="molecule type" value="protein"/>
</dbReference>
<dbReference type="Bgee" id="ENSG00000177106">
    <property type="expression patterns" value="Expressed in lower esophagus mucosa and 147 other cell types or tissues"/>
</dbReference>
<dbReference type="ExpressionAtlas" id="Q9H6S3">
    <property type="expression patterns" value="baseline and differential"/>
</dbReference>
<dbReference type="GO" id="GO:0005813">
    <property type="term" value="C:centrosome"/>
    <property type="evidence" value="ECO:0000314"/>
    <property type="project" value="HPA"/>
</dbReference>
<dbReference type="GO" id="GO:0005829">
    <property type="term" value="C:cytosol"/>
    <property type="evidence" value="ECO:0000314"/>
    <property type="project" value="HPA"/>
</dbReference>
<dbReference type="GO" id="GO:0070062">
    <property type="term" value="C:extracellular exosome"/>
    <property type="evidence" value="ECO:0007005"/>
    <property type="project" value="UniProtKB"/>
</dbReference>
<dbReference type="GO" id="GO:0005886">
    <property type="term" value="C:plasma membrane"/>
    <property type="evidence" value="ECO:0000318"/>
    <property type="project" value="GO_Central"/>
</dbReference>
<dbReference type="GO" id="GO:0032991">
    <property type="term" value="C:protein-containing complex"/>
    <property type="evidence" value="ECO:0000314"/>
    <property type="project" value="UniProtKB"/>
</dbReference>
<dbReference type="GO" id="GO:0032587">
    <property type="term" value="C:ruffle membrane"/>
    <property type="evidence" value="ECO:0000314"/>
    <property type="project" value="UniProtKB"/>
</dbReference>
<dbReference type="GO" id="GO:0032421">
    <property type="term" value="C:stereocilium bundle"/>
    <property type="evidence" value="ECO:0000250"/>
    <property type="project" value="UniProtKB"/>
</dbReference>
<dbReference type="GO" id="GO:0032426">
    <property type="term" value="C:stereocilium tip"/>
    <property type="evidence" value="ECO:0000250"/>
    <property type="project" value="UniProtKB"/>
</dbReference>
<dbReference type="GO" id="GO:0031982">
    <property type="term" value="C:vesicle"/>
    <property type="evidence" value="ECO:0007005"/>
    <property type="project" value="UniProtKB"/>
</dbReference>
<dbReference type="GO" id="GO:0003779">
    <property type="term" value="F:actin binding"/>
    <property type="evidence" value="ECO:0000314"/>
    <property type="project" value="UniProtKB"/>
</dbReference>
<dbReference type="GO" id="GO:0045296">
    <property type="term" value="F:cadherin binding"/>
    <property type="evidence" value="ECO:0007005"/>
    <property type="project" value="BHF-UCL"/>
</dbReference>
<dbReference type="GO" id="GO:1900029">
    <property type="term" value="P:positive regulation of ruffle assembly"/>
    <property type="evidence" value="ECO:0000316"/>
    <property type="project" value="UniProtKB"/>
</dbReference>
<dbReference type="GO" id="GO:0035023">
    <property type="term" value="P:regulation of Rho protein signal transduction"/>
    <property type="evidence" value="ECO:0000314"/>
    <property type="project" value="UniProtKB"/>
</dbReference>
<dbReference type="GO" id="GO:0007266">
    <property type="term" value="P:Rho protein signal transduction"/>
    <property type="evidence" value="ECO:0000314"/>
    <property type="project" value="UniProtKB"/>
</dbReference>
<dbReference type="GO" id="GO:0007605">
    <property type="term" value="P:sensory perception of sound"/>
    <property type="evidence" value="ECO:0000250"/>
    <property type="project" value="UniProtKB"/>
</dbReference>
<dbReference type="CDD" id="cd01210">
    <property type="entry name" value="PTB_EPS8"/>
    <property type="match status" value="1"/>
</dbReference>
<dbReference type="CDD" id="cd09540">
    <property type="entry name" value="SAM_EPS8-like"/>
    <property type="match status" value="1"/>
</dbReference>
<dbReference type="CDD" id="cd11764">
    <property type="entry name" value="SH3_Eps8"/>
    <property type="match status" value="1"/>
</dbReference>
<dbReference type="FunFam" id="1.10.150.50:FF:000023">
    <property type="entry name" value="Epidermal growth factor receptor kinase substrate 8"/>
    <property type="match status" value="1"/>
</dbReference>
<dbReference type="FunFam" id="2.30.29.30:FF:000218">
    <property type="entry name" value="Epidermal growth factor receptor kinase substrate 8-like 2"/>
    <property type="match status" value="1"/>
</dbReference>
<dbReference type="FunFam" id="2.30.30.40:FF:000180">
    <property type="entry name" value="epidermal growth factor receptor kinase substrate 8-like protein 2"/>
    <property type="match status" value="1"/>
</dbReference>
<dbReference type="Gene3D" id="2.30.29.30">
    <property type="entry name" value="Pleckstrin-homology domain (PH domain)/Phosphotyrosine-binding domain (PTB)"/>
    <property type="match status" value="1"/>
</dbReference>
<dbReference type="Gene3D" id="2.30.30.40">
    <property type="entry name" value="SH3 Domains"/>
    <property type="match status" value="1"/>
</dbReference>
<dbReference type="Gene3D" id="1.10.150.50">
    <property type="entry name" value="Transcription Factor, Ets-1"/>
    <property type="match status" value="1"/>
</dbReference>
<dbReference type="InterPro" id="IPR039801">
    <property type="entry name" value="EPS8-like"/>
</dbReference>
<dbReference type="InterPro" id="IPR055093">
    <property type="entry name" value="EPS8_2nd"/>
</dbReference>
<dbReference type="InterPro" id="IPR033928">
    <property type="entry name" value="EPS8_PTB"/>
</dbReference>
<dbReference type="InterPro" id="IPR035462">
    <property type="entry name" value="Eps8_SH3"/>
</dbReference>
<dbReference type="InterPro" id="IPR011993">
    <property type="entry name" value="PH-like_dom_sf"/>
</dbReference>
<dbReference type="InterPro" id="IPR013625">
    <property type="entry name" value="PTB"/>
</dbReference>
<dbReference type="InterPro" id="IPR006020">
    <property type="entry name" value="PTB/PI_dom"/>
</dbReference>
<dbReference type="InterPro" id="IPR013761">
    <property type="entry name" value="SAM/pointed_sf"/>
</dbReference>
<dbReference type="InterPro" id="IPR041418">
    <property type="entry name" value="SAM_3"/>
</dbReference>
<dbReference type="InterPro" id="IPR036028">
    <property type="entry name" value="SH3-like_dom_sf"/>
</dbReference>
<dbReference type="InterPro" id="IPR001452">
    <property type="entry name" value="SH3_domain"/>
</dbReference>
<dbReference type="PANTHER" id="PTHR12287:SF20">
    <property type="entry name" value="EPIDERMAL GROWTH FACTOR RECEPTOR KINASE SUBSTRATE 8-LIKE PROTEIN 2"/>
    <property type="match status" value="1"/>
</dbReference>
<dbReference type="PANTHER" id="PTHR12287">
    <property type="entry name" value="EPIDERMAL GROWTH FACTOR RECEPTOR KINASE SUBSTRATE EPS8-RELATED PROTEIN"/>
    <property type="match status" value="1"/>
</dbReference>
<dbReference type="Pfam" id="PF22975">
    <property type="entry name" value="EPS8_2nd"/>
    <property type="match status" value="1"/>
</dbReference>
<dbReference type="Pfam" id="PF08416">
    <property type="entry name" value="PTB"/>
    <property type="match status" value="1"/>
</dbReference>
<dbReference type="Pfam" id="PF18016">
    <property type="entry name" value="SAM_3"/>
    <property type="match status" value="1"/>
</dbReference>
<dbReference type="Pfam" id="PF00018">
    <property type="entry name" value="SH3_1"/>
    <property type="match status" value="1"/>
</dbReference>
<dbReference type="SMART" id="SM00462">
    <property type="entry name" value="PTB"/>
    <property type="match status" value="1"/>
</dbReference>
<dbReference type="SMART" id="SM00326">
    <property type="entry name" value="SH3"/>
    <property type="match status" value="1"/>
</dbReference>
<dbReference type="SUPFAM" id="SSF50729">
    <property type="entry name" value="PH domain-like"/>
    <property type="match status" value="1"/>
</dbReference>
<dbReference type="SUPFAM" id="SSF50044">
    <property type="entry name" value="SH3-domain"/>
    <property type="match status" value="1"/>
</dbReference>
<dbReference type="PROSITE" id="PS01179">
    <property type="entry name" value="PID"/>
    <property type="match status" value="1"/>
</dbReference>
<dbReference type="PROSITE" id="PS50002">
    <property type="entry name" value="SH3"/>
    <property type="match status" value="1"/>
</dbReference>
<keyword id="KW-0002">3D-structure</keyword>
<keyword id="KW-0025">Alternative splicing</keyword>
<keyword id="KW-0966">Cell projection</keyword>
<keyword id="KW-0963">Cytoplasm</keyword>
<keyword id="KW-0209">Deafness</keyword>
<keyword id="KW-1010">Non-syndromic deafness</keyword>
<keyword id="KW-0597">Phosphoprotein</keyword>
<keyword id="KW-1267">Proteomics identification</keyword>
<keyword id="KW-1185">Reference proteome</keyword>
<keyword id="KW-0728">SH3 domain</keyword>
<gene>
    <name type="primary">EPS8L2</name>
    <name type="synonym">EPS8R2</name>
    <name type="ORF">PP13181</name>
</gene>
<feature type="chain" id="PRO_0000239084" description="Epidermal growth factor receptor kinase substrate 8-like protein 2">
    <location>
        <begin position="1"/>
        <end position="715"/>
    </location>
</feature>
<feature type="domain" description="PID" evidence="2">
    <location>
        <begin position="46"/>
        <end position="202"/>
    </location>
</feature>
<feature type="domain" description="SH3" evidence="3">
    <location>
        <begin position="492"/>
        <end position="551"/>
    </location>
</feature>
<feature type="region of interest" description="Disordered" evidence="4">
    <location>
        <begin position="183"/>
        <end position="243"/>
    </location>
</feature>
<feature type="region of interest" description="Disordered" evidence="4">
    <location>
        <begin position="448"/>
        <end position="487"/>
    </location>
</feature>
<feature type="compositionally biased region" description="Pro residues" evidence="4">
    <location>
        <begin position="199"/>
        <end position="208"/>
    </location>
</feature>
<feature type="compositionally biased region" description="Basic and acidic residues" evidence="4">
    <location>
        <begin position="213"/>
        <end position="222"/>
    </location>
</feature>
<feature type="compositionally biased region" description="Basic and acidic residues" evidence="4">
    <location>
        <begin position="234"/>
        <end position="243"/>
    </location>
</feature>
<feature type="compositionally biased region" description="Polar residues" evidence="4">
    <location>
        <begin position="451"/>
        <end position="466"/>
    </location>
</feature>
<feature type="modified residue" description="Phosphoserine" evidence="15">
    <location>
        <position position="240"/>
    </location>
</feature>
<feature type="modified residue" description="Phosphothreonine" evidence="1">
    <location>
        <position position="303"/>
    </location>
</feature>
<feature type="modified residue" description="Phosphoserine" evidence="12">
    <location>
        <position position="449"/>
    </location>
</feature>
<feature type="modified residue" description="Phosphothreonine" evidence="13">
    <location>
        <position position="469"/>
    </location>
</feature>
<feature type="modified residue" description="Phosphoserine" evidence="13 14 15">
    <location>
        <position position="570"/>
    </location>
</feature>
<feature type="splice variant" id="VSP_019092" description="In isoform 2." evidence="8 10">
    <location>
        <begin position="1"/>
        <end position="388"/>
    </location>
</feature>
<feature type="splice variant" id="VSP_054144" description="In isoform 3." evidence="9">
    <original>S</original>
    <variation>SQSAQTPGASRVRAMYP</variation>
    <location>
        <position position="108"/>
    </location>
</feature>
<feature type="sequence conflict" description="In Ref. 4; BAD96623." evidence="11" ref="4">
    <original>S</original>
    <variation>N</variation>
    <location>
        <position position="146"/>
    </location>
</feature>
<feature type="sequence conflict" description="In Ref. 3; BAB15180." evidence="11" ref="3">
    <original>I</original>
    <variation>F</variation>
    <location>
        <position position="198"/>
    </location>
</feature>
<feature type="sequence conflict" description="In Ref. 3; BAB15180." evidence="11" ref="3">
    <original>H</original>
    <variation>R</variation>
    <location>
        <position position="589"/>
    </location>
</feature>
<feature type="sequence conflict" description="In Ref. 3; BAB15180." evidence="11" ref="3">
    <original>V</original>
    <variation>A</variation>
    <location>
        <position position="620"/>
    </location>
</feature>
<feature type="strand" evidence="17">
    <location>
        <begin position="506"/>
        <end position="510"/>
    </location>
</feature>
<feature type="strand" evidence="17">
    <location>
        <begin position="518"/>
        <end position="523"/>
    </location>
</feature>
<feature type="strand" evidence="17">
    <location>
        <begin position="525"/>
        <end position="532"/>
    </location>
</feature>
<feature type="strand" evidence="17">
    <location>
        <begin position="538"/>
        <end position="542"/>
    </location>
</feature>
<feature type="turn" evidence="17">
    <location>
        <begin position="543"/>
        <end position="545"/>
    </location>
</feature>
<feature type="helix" evidence="16">
    <location>
        <begin position="630"/>
        <end position="640"/>
    </location>
</feature>
<feature type="helix" evidence="16">
    <location>
        <begin position="646"/>
        <end position="649"/>
    </location>
</feature>
<feature type="helix" evidence="16">
    <location>
        <begin position="655"/>
        <end position="659"/>
    </location>
</feature>
<feature type="helix" evidence="16">
    <location>
        <begin position="663"/>
        <end position="670"/>
    </location>
</feature>
<feature type="turn" evidence="16">
    <location>
        <begin position="671"/>
        <end position="673"/>
    </location>
</feature>
<feature type="helix" evidence="16">
    <location>
        <begin position="674"/>
        <end position="689"/>
    </location>
</feature>
<protein>
    <recommendedName>
        <fullName>Epidermal growth factor receptor kinase substrate 8-like protein 2</fullName>
        <shortName>EPS8-like protein 2</shortName>
    </recommendedName>
    <alternativeName>
        <fullName>Epidermal growth factor receptor pathway substrate 8-related protein 2</fullName>
        <shortName>EPS8-related protein 2</shortName>
    </alternativeName>
</protein>
<name>ES8L2_HUMAN</name>
<proteinExistence type="evidence at protein level"/>
<comment type="function">
    <text evidence="1 5">Stimulates guanine exchange activity of SOS1. May play a role in membrane ruffling and remodeling of the actin cytoskeleton. In the cochlea, is required for stereocilia maintenance in adult hair cells (By similarity).</text>
</comment>
<comment type="subunit">
    <text evidence="5">Interacts with ABI1. Part of a complex that contains SOS1, ABI1 and EPS8L2. Associates with F-actin.</text>
</comment>
<comment type="interaction">
    <interactant intactId="EBI-3940939">
        <id>Q9H6S3</id>
    </interactant>
    <interactant intactId="EBI-2115097">
        <id>P07339</id>
        <label>CTSD</label>
    </interactant>
    <organismsDiffer>false</organismsDiffer>
    <experiments>3</experiments>
</comment>
<comment type="interaction">
    <interactant intactId="EBI-3940939">
        <id>Q9H6S3</id>
    </interactant>
    <interactant intactId="EBI-10976677">
        <id>G5E9A7</id>
        <label>DMWD</label>
    </interactant>
    <organismsDiffer>false</organismsDiffer>
    <experiments>3</experiments>
</comment>
<comment type="interaction">
    <interactant intactId="EBI-3940939">
        <id>Q9H6S3</id>
    </interactant>
    <interactant intactId="EBI-747754">
        <id>P28799</id>
        <label>GRN</label>
    </interactant>
    <organismsDiffer>false</organismsDiffer>
    <experiments>3</experiments>
</comment>
<comment type="interaction">
    <interactant intactId="EBI-3940939">
        <id>Q9H6S3</id>
    </interactant>
    <interactant intactId="EBI-10975473">
        <id>O60333-2</id>
        <label>KIF1B</label>
    </interactant>
    <organismsDiffer>false</organismsDiffer>
    <experiments>3</experiments>
</comment>
<comment type="interaction">
    <interactant intactId="EBI-3940939">
        <id>Q9H6S3</id>
    </interactant>
    <interactant intactId="EBI-475646">
        <id>P07196</id>
        <label>NEFL</label>
    </interactant>
    <organismsDiffer>false</organismsDiffer>
    <experiments>3</experiments>
</comment>
<comment type="interaction">
    <interactant intactId="EBI-3940939">
        <id>Q9H6S3</id>
    </interactant>
    <interactant intactId="EBI-5235340">
        <id>Q7Z699</id>
        <label>SPRED1</label>
    </interactant>
    <organismsDiffer>false</organismsDiffer>
    <experiments>3</experiments>
</comment>
<comment type="interaction">
    <interactant intactId="EBI-3940939">
        <id>Q9H6S3</id>
    </interactant>
    <interactant intactId="EBI-720609">
        <id>O76024</id>
        <label>WFS1</label>
    </interactant>
    <organismsDiffer>false</organismsDiffer>
    <experiments>3</experiments>
</comment>
<comment type="subcellular location">
    <subcellularLocation>
        <location evidence="5">Cytoplasm</location>
    </subcellularLocation>
    <subcellularLocation>
        <location evidence="1">Cell projection</location>
        <location evidence="1">Stereocilium</location>
    </subcellularLocation>
    <text evidence="1">Localizes at the tips of the stereocilia of the inner and outer hair cells.</text>
</comment>
<comment type="alternative products">
    <event type="alternative splicing"/>
    <isoform>
        <id>Q9H6S3-1</id>
        <name>1</name>
        <sequence type="displayed"/>
    </isoform>
    <isoform>
        <id>Q9H6S3-2</id>
        <name>2</name>
        <sequence type="described" ref="VSP_019092"/>
    </isoform>
    <isoform>
        <id>Q9H6S3-3</id>
        <name>3</name>
        <sequence type="described" ref="VSP_054144"/>
    </isoform>
</comment>
<comment type="tissue specificity">
    <text evidence="5">Detected in fibroblasts and placenta.</text>
</comment>
<comment type="disease" evidence="6 7">
    <disease id="DI-05056">
        <name>Deafness, autosomal recessive, 106</name>
        <acronym>DFNB106</acronym>
        <description>A form of non-syndromic sensorineural hearing loss. Sensorineural deafness results from damage to the neural receptors of the inner ear, the nerve pathways to the brain, or the area of the brain that receives sound information.</description>
        <dbReference type="MIM" id="617637"/>
    </disease>
    <text>The disease is caused by variants affecting the gene represented in this entry.</text>
</comment>
<comment type="similarity">
    <text evidence="11">Belongs to the EPS8 family.</text>
</comment>
<comment type="sequence caution" evidence="11">
    <conflict type="frameshift">
        <sequence resource="EMBL-CDS" id="AAL55838"/>
    </conflict>
</comment>
<comment type="sequence caution" evidence="11">
    <conflict type="erroneous initiation">
        <sequence resource="EMBL-CDS" id="BAB15180"/>
    </conflict>
    <text>Extended N-terminus.</text>
</comment>